<reference key="1">
    <citation type="journal article" date="2005" name="Nat. Biotechnol.">
        <title>Complete genome sequence of the plant commensal Pseudomonas fluorescens Pf-5.</title>
        <authorList>
            <person name="Paulsen I.T."/>
            <person name="Press C.M."/>
            <person name="Ravel J."/>
            <person name="Kobayashi D.Y."/>
            <person name="Myers G.S.A."/>
            <person name="Mavrodi D.V."/>
            <person name="DeBoy R.T."/>
            <person name="Seshadri R."/>
            <person name="Ren Q."/>
            <person name="Madupu R."/>
            <person name="Dodson R.J."/>
            <person name="Durkin A.S."/>
            <person name="Brinkac L.M."/>
            <person name="Daugherty S.C."/>
            <person name="Sullivan S.A."/>
            <person name="Rosovitz M.J."/>
            <person name="Gwinn M.L."/>
            <person name="Zhou L."/>
            <person name="Schneider D.J."/>
            <person name="Cartinhour S.W."/>
            <person name="Nelson W.C."/>
            <person name="Weidman J."/>
            <person name="Watkins K."/>
            <person name="Tran K."/>
            <person name="Khouri H."/>
            <person name="Pierson E.A."/>
            <person name="Pierson L.S. III"/>
            <person name="Thomashow L.S."/>
            <person name="Loper J.E."/>
        </authorList>
    </citation>
    <scope>NUCLEOTIDE SEQUENCE [LARGE SCALE GENOMIC DNA]</scope>
    <source>
        <strain>ATCC BAA-477 / NRRL B-23932 / Pf-5</strain>
    </source>
</reference>
<organism>
    <name type="scientific">Pseudomonas fluorescens (strain ATCC BAA-477 / NRRL B-23932 / Pf-5)</name>
    <dbReference type="NCBI Taxonomy" id="220664"/>
    <lineage>
        <taxon>Bacteria</taxon>
        <taxon>Pseudomonadati</taxon>
        <taxon>Pseudomonadota</taxon>
        <taxon>Gammaproteobacteria</taxon>
        <taxon>Pseudomonadales</taxon>
        <taxon>Pseudomonadaceae</taxon>
        <taxon>Pseudomonas</taxon>
    </lineage>
</organism>
<feature type="chain" id="PRO_0000208315" description="Glutamyl-Q tRNA(Asp) synthetase">
    <location>
        <begin position="1"/>
        <end position="298"/>
    </location>
</feature>
<feature type="short sequence motif" description="'HIGH' region">
    <location>
        <begin position="15"/>
        <end position="25"/>
    </location>
</feature>
<feature type="short sequence motif" description="'KMSKS' region">
    <location>
        <begin position="231"/>
        <end position="235"/>
    </location>
</feature>
<feature type="binding site" evidence="1">
    <location>
        <begin position="12"/>
        <end position="16"/>
    </location>
    <ligand>
        <name>L-glutamate</name>
        <dbReference type="ChEBI" id="CHEBI:29985"/>
    </ligand>
</feature>
<feature type="binding site" evidence="1">
    <location>
        <position position="48"/>
    </location>
    <ligand>
        <name>L-glutamate</name>
        <dbReference type="ChEBI" id="CHEBI:29985"/>
    </ligand>
</feature>
<feature type="binding site" evidence="1">
    <location>
        <position position="104"/>
    </location>
    <ligand>
        <name>Zn(2+)</name>
        <dbReference type="ChEBI" id="CHEBI:29105"/>
    </ligand>
</feature>
<feature type="binding site" evidence="1">
    <location>
        <position position="106"/>
    </location>
    <ligand>
        <name>Zn(2+)</name>
        <dbReference type="ChEBI" id="CHEBI:29105"/>
    </ligand>
</feature>
<feature type="binding site" evidence="1">
    <location>
        <position position="118"/>
    </location>
    <ligand>
        <name>Zn(2+)</name>
        <dbReference type="ChEBI" id="CHEBI:29105"/>
    </ligand>
</feature>
<feature type="binding site" evidence="1">
    <location>
        <position position="122"/>
    </location>
    <ligand>
        <name>Zn(2+)</name>
        <dbReference type="ChEBI" id="CHEBI:29105"/>
    </ligand>
</feature>
<feature type="binding site" evidence="1">
    <location>
        <position position="175"/>
    </location>
    <ligand>
        <name>L-glutamate</name>
        <dbReference type="ChEBI" id="CHEBI:29985"/>
    </ligand>
</feature>
<feature type="binding site" evidence="1">
    <location>
        <position position="193"/>
    </location>
    <ligand>
        <name>L-glutamate</name>
        <dbReference type="ChEBI" id="CHEBI:29985"/>
    </ligand>
</feature>
<feature type="binding site" evidence="1">
    <location>
        <position position="234"/>
    </location>
    <ligand>
        <name>ATP</name>
        <dbReference type="ChEBI" id="CHEBI:30616"/>
    </ligand>
</feature>
<keyword id="KW-0030">Aminoacyl-tRNA synthetase</keyword>
<keyword id="KW-0067">ATP-binding</keyword>
<keyword id="KW-0436">Ligase</keyword>
<keyword id="KW-0479">Metal-binding</keyword>
<keyword id="KW-0547">Nucleotide-binding</keyword>
<keyword id="KW-0862">Zinc</keyword>
<comment type="function">
    <text evidence="1">Catalyzes the tRNA-independent activation of glutamate in presence of ATP and the subsequent transfer of glutamate onto a tRNA(Asp). Glutamate is transferred on the 2-amino-5-(4,5-dihydroxy-2-cyclopenten-1-yl) moiety of the queuosine in the wobble position of the QUC anticodon.</text>
</comment>
<comment type="cofactor">
    <cofactor evidence="1">
        <name>Zn(2+)</name>
        <dbReference type="ChEBI" id="CHEBI:29105"/>
    </cofactor>
    <text evidence="1">Binds 1 zinc ion per subunit.</text>
</comment>
<comment type="similarity">
    <text evidence="1">Belongs to the class-I aminoacyl-tRNA synthetase family. GluQ subfamily.</text>
</comment>
<gene>
    <name evidence="1" type="primary">gluQ</name>
    <name type="ordered locus">PFL_5271</name>
</gene>
<name>GLUQ_PSEF5</name>
<proteinExistence type="inferred from homology"/>
<accession>Q4K5Z0</accession>
<evidence type="ECO:0000255" key="1">
    <source>
        <dbReference type="HAMAP-Rule" id="MF_01428"/>
    </source>
</evidence>
<sequence length="298" mass="33237">MTASTSSSYIGRFAPTPSGYLHFGSLVAALASYLDARAVGGRWLLRMEDLDPPREEPGAQAAILKALESYGFEWDGQMIRQSDRHDAYGEVLNRLFQQGLAYACTCSRKQLEPYHGIYPGLCRNLGHAQDDAAIRLRVPELEYRFVDRVQGEYRQHLGREVGDFVIRRRDGLYAYQLAVVLDDAWQGITDIVRGADLLDSTPRQLYLQELLGLSQPRYLHVPLITQPDGHKLGKSYRSPPLTEDQAPPLLLRALRALGQKPPADLDGASVAQIMAWGMAHWDAALIPRTLSVPEAQLS</sequence>
<dbReference type="EC" id="6.1.1.-" evidence="1"/>
<dbReference type="EMBL" id="CP000076">
    <property type="protein sequence ID" value="AAY94485.1"/>
    <property type="molecule type" value="Genomic_DNA"/>
</dbReference>
<dbReference type="SMR" id="Q4K5Z0"/>
<dbReference type="STRING" id="220664.PFL_5271"/>
<dbReference type="KEGG" id="pfl:PFL_5271"/>
<dbReference type="PATRIC" id="fig|220664.5.peg.5383"/>
<dbReference type="eggNOG" id="COG0008">
    <property type="taxonomic scope" value="Bacteria"/>
</dbReference>
<dbReference type="HOGENOM" id="CLU_015768_0_1_6"/>
<dbReference type="Proteomes" id="UP000008540">
    <property type="component" value="Chromosome"/>
</dbReference>
<dbReference type="GO" id="GO:0005829">
    <property type="term" value="C:cytosol"/>
    <property type="evidence" value="ECO:0007669"/>
    <property type="project" value="TreeGrafter"/>
</dbReference>
<dbReference type="GO" id="GO:0005524">
    <property type="term" value="F:ATP binding"/>
    <property type="evidence" value="ECO:0007669"/>
    <property type="project" value="UniProtKB-KW"/>
</dbReference>
<dbReference type="GO" id="GO:0004818">
    <property type="term" value="F:glutamate-tRNA ligase activity"/>
    <property type="evidence" value="ECO:0007669"/>
    <property type="project" value="TreeGrafter"/>
</dbReference>
<dbReference type="GO" id="GO:0008270">
    <property type="term" value="F:zinc ion binding"/>
    <property type="evidence" value="ECO:0007669"/>
    <property type="project" value="UniProtKB-UniRule"/>
</dbReference>
<dbReference type="GO" id="GO:0006424">
    <property type="term" value="P:glutamyl-tRNA aminoacylation"/>
    <property type="evidence" value="ECO:0007669"/>
    <property type="project" value="InterPro"/>
</dbReference>
<dbReference type="GO" id="GO:0006400">
    <property type="term" value="P:tRNA modification"/>
    <property type="evidence" value="ECO:0007669"/>
    <property type="project" value="InterPro"/>
</dbReference>
<dbReference type="FunFam" id="3.40.50.620:FF:000093">
    <property type="entry name" value="Glutamyl-Q tRNA(Asp) synthetase"/>
    <property type="match status" value="1"/>
</dbReference>
<dbReference type="Gene3D" id="3.40.50.620">
    <property type="entry name" value="HUPs"/>
    <property type="match status" value="1"/>
</dbReference>
<dbReference type="HAMAP" id="MF_01428">
    <property type="entry name" value="Glu_Q_tRNA_synth"/>
    <property type="match status" value="1"/>
</dbReference>
<dbReference type="InterPro" id="IPR022380">
    <property type="entry name" value="Glu-Q_tRNA(Asp)_Synthase"/>
</dbReference>
<dbReference type="InterPro" id="IPR000924">
    <property type="entry name" value="Glu/Gln-tRNA-synth"/>
</dbReference>
<dbReference type="InterPro" id="IPR020058">
    <property type="entry name" value="Glu/Gln-tRNA-synth_Ib_cat-dom"/>
</dbReference>
<dbReference type="InterPro" id="IPR049940">
    <property type="entry name" value="GluQ/Sye"/>
</dbReference>
<dbReference type="InterPro" id="IPR014729">
    <property type="entry name" value="Rossmann-like_a/b/a_fold"/>
</dbReference>
<dbReference type="NCBIfam" id="NF004314">
    <property type="entry name" value="PRK05710.1-3"/>
    <property type="match status" value="1"/>
</dbReference>
<dbReference type="NCBIfam" id="TIGR03838">
    <property type="entry name" value="queuosine_YadB"/>
    <property type="match status" value="1"/>
</dbReference>
<dbReference type="PANTHER" id="PTHR43311">
    <property type="entry name" value="GLUTAMATE--TRNA LIGASE"/>
    <property type="match status" value="1"/>
</dbReference>
<dbReference type="PANTHER" id="PTHR43311:SF1">
    <property type="entry name" value="GLUTAMYL-Q TRNA(ASP) SYNTHETASE"/>
    <property type="match status" value="1"/>
</dbReference>
<dbReference type="Pfam" id="PF00749">
    <property type="entry name" value="tRNA-synt_1c"/>
    <property type="match status" value="1"/>
</dbReference>
<dbReference type="PRINTS" id="PR00987">
    <property type="entry name" value="TRNASYNTHGLU"/>
</dbReference>
<dbReference type="SUPFAM" id="SSF52374">
    <property type="entry name" value="Nucleotidylyl transferase"/>
    <property type="match status" value="1"/>
</dbReference>
<protein>
    <recommendedName>
        <fullName evidence="1">Glutamyl-Q tRNA(Asp) synthetase</fullName>
        <shortName evidence="1">Glu-Q-RSs</shortName>
        <ecNumber evidence="1">6.1.1.-</ecNumber>
    </recommendedName>
</protein>